<proteinExistence type="inferred from homology"/>
<keyword id="KW-0131">Cell cycle</keyword>
<keyword id="KW-0132">Cell division</keyword>
<keyword id="KW-0963">Cytoplasm</keyword>
<keyword id="KW-0717">Septation</keyword>
<dbReference type="EMBL" id="CU928164">
    <property type="protein sequence ID" value="CAR16244.1"/>
    <property type="molecule type" value="Genomic_DNA"/>
</dbReference>
<dbReference type="RefSeq" id="WP_001194736.1">
    <property type="nucleotide sequence ID" value="NC_011750.1"/>
</dbReference>
<dbReference type="RefSeq" id="YP_002406152.1">
    <property type="nucleotide sequence ID" value="NC_011750.1"/>
</dbReference>
<dbReference type="SMR" id="B7NHK6"/>
<dbReference type="STRING" id="585057.ECIAI39_0103"/>
<dbReference type="KEGG" id="ect:ECIAI39_0103"/>
<dbReference type="PATRIC" id="fig|585057.6.peg.113"/>
<dbReference type="HOGENOM" id="CLU_076303_0_0_6"/>
<dbReference type="Proteomes" id="UP000000749">
    <property type="component" value="Chromosome"/>
</dbReference>
<dbReference type="GO" id="GO:0032153">
    <property type="term" value="C:cell division site"/>
    <property type="evidence" value="ECO:0007669"/>
    <property type="project" value="TreeGrafter"/>
</dbReference>
<dbReference type="GO" id="GO:0005737">
    <property type="term" value="C:cytoplasm"/>
    <property type="evidence" value="ECO:0007669"/>
    <property type="project" value="UniProtKB-SubCell"/>
</dbReference>
<dbReference type="GO" id="GO:0000917">
    <property type="term" value="P:division septum assembly"/>
    <property type="evidence" value="ECO:0007669"/>
    <property type="project" value="UniProtKB-KW"/>
</dbReference>
<dbReference type="GO" id="GO:0043093">
    <property type="term" value="P:FtsZ-dependent cytokinesis"/>
    <property type="evidence" value="ECO:0007669"/>
    <property type="project" value="UniProtKB-UniRule"/>
</dbReference>
<dbReference type="FunFam" id="1.10.3900.10:FF:000001">
    <property type="entry name" value="Cell division protein ZapD"/>
    <property type="match status" value="1"/>
</dbReference>
<dbReference type="FunFam" id="2.60.440.10:FF:000001">
    <property type="entry name" value="Cell division protein ZapD"/>
    <property type="match status" value="1"/>
</dbReference>
<dbReference type="Gene3D" id="1.10.3900.10">
    <property type="entry name" value="YacF-like"/>
    <property type="match status" value="1"/>
</dbReference>
<dbReference type="Gene3D" id="2.60.440.10">
    <property type="entry name" value="YacF-like domains"/>
    <property type="match status" value="1"/>
</dbReference>
<dbReference type="HAMAP" id="MF_01092">
    <property type="entry name" value="ZapD"/>
    <property type="match status" value="1"/>
</dbReference>
<dbReference type="InterPro" id="IPR009777">
    <property type="entry name" value="ZapD"/>
</dbReference>
<dbReference type="InterPro" id="IPR027462">
    <property type="entry name" value="ZapD_C"/>
</dbReference>
<dbReference type="InterPro" id="IPR036268">
    <property type="entry name" value="ZapD_sf"/>
</dbReference>
<dbReference type="NCBIfam" id="NF003653">
    <property type="entry name" value="PRK05287.1-1"/>
    <property type="match status" value="1"/>
</dbReference>
<dbReference type="NCBIfam" id="NF003655">
    <property type="entry name" value="PRK05287.1-3"/>
    <property type="match status" value="1"/>
</dbReference>
<dbReference type="PANTHER" id="PTHR39455">
    <property type="entry name" value="CELL DIVISION PROTEIN ZAPD"/>
    <property type="match status" value="1"/>
</dbReference>
<dbReference type="PANTHER" id="PTHR39455:SF1">
    <property type="entry name" value="CELL DIVISION PROTEIN ZAPD"/>
    <property type="match status" value="1"/>
</dbReference>
<dbReference type="Pfam" id="PF07072">
    <property type="entry name" value="ZapD"/>
    <property type="match status" value="1"/>
</dbReference>
<dbReference type="SUPFAM" id="SSF160950">
    <property type="entry name" value="YacF-like"/>
    <property type="match status" value="1"/>
</dbReference>
<sequence length="247" mass="28308">MQTQVLFEHPLNEKMRTWLRIEFLIQQLTVNLPIVDHAGALHFFRNVSELLDVFERGEVRTELLKELDRQQRKLQTWIGVPGVDQSRIEALIQQLKAAGSVLISAPRIGQFLREDRLIALVRQRLSIPGGCCSFDLPTLHIWLHLPQTQRDSQVETWIASLNPLTQALTMVLDLIRQSAPFRKQTSLNGFYQDNGGDADLLRLNLSLDSQLYPQISGHKSRFAIRFMPLDSENGQVPERLDFELACC</sequence>
<protein>
    <recommendedName>
        <fullName evidence="1">Cell division protein ZapD</fullName>
    </recommendedName>
    <alternativeName>
        <fullName evidence="1">Z ring-associated protein D</fullName>
    </alternativeName>
</protein>
<accession>B7NHK6</accession>
<organism>
    <name type="scientific">Escherichia coli O7:K1 (strain IAI39 / ExPEC)</name>
    <dbReference type="NCBI Taxonomy" id="585057"/>
    <lineage>
        <taxon>Bacteria</taxon>
        <taxon>Pseudomonadati</taxon>
        <taxon>Pseudomonadota</taxon>
        <taxon>Gammaproteobacteria</taxon>
        <taxon>Enterobacterales</taxon>
        <taxon>Enterobacteriaceae</taxon>
        <taxon>Escherichia</taxon>
    </lineage>
</organism>
<feature type="chain" id="PRO_1000136937" description="Cell division protein ZapD">
    <location>
        <begin position="1"/>
        <end position="247"/>
    </location>
</feature>
<reference key="1">
    <citation type="journal article" date="2009" name="PLoS Genet.">
        <title>Organised genome dynamics in the Escherichia coli species results in highly diverse adaptive paths.</title>
        <authorList>
            <person name="Touchon M."/>
            <person name="Hoede C."/>
            <person name="Tenaillon O."/>
            <person name="Barbe V."/>
            <person name="Baeriswyl S."/>
            <person name="Bidet P."/>
            <person name="Bingen E."/>
            <person name="Bonacorsi S."/>
            <person name="Bouchier C."/>
            <person name="Bouvet O."/>
            <person name="Calteau A."/>
            <person name="Chiapello H."/>
            <person name="Clermont O."/>
            <person name="Cruveiller S."/>
            <person name="Danchin A."/>
            <person name="Diard M."/>
            <person name="Dossat C."/>
            <person name="Karoui M.E."/>
            <person name="Frapy E."/>
            <person name="Garry L."/>
            <person name="Ghigo J.M."/>
            <person name="Gilles A.M."/>
            <person name="Johnson J."/>
            <person name="Le Bouguenec C."/>
            <person name="Lescat M."/>
            <person name="Mangenot S."/>
            <person name="Martinez-Jehanne V."/>
            <person name="Matic I."/>
            <person name="Nassif X."/>
            <person name="Oztas S."/>
            <person name="Petit M.A."/>
            <person name="Pichon C."/>
            <person name="Rouy Z."/>
            <person name="Ruf C.S."/>
            <person name="Schneider D."/>
            <person name="Tourret J."/>
            <person name="Vacherie B."/>
            <person name="Vallenet D."/>
            <person name="Medigue C."/>
            <person name="Rocha E.P.C."/>
            <person name="Denamur E."/>
        </authorList>
    </citation>
    <scope>NUCLEOTIDE SEQUENCE [LARGE SCALE GENOMIC DNA]</scope>
    <source>
        <strain>IAI39 / ExPEC</strain>
    </source>
</reference>
<evidence type="ECO:0000255" key="1">
    <source>
        <dbReference type="HAMAP-Rule" id="MF_01092"/>
    </source>
</evidence>
<comment type="function">
    <text evidence="1">Cell division factor that enhances FtsZ-ring assembly. Directly interacts with FtsZ and promotes bundling of FtsZ protofilaments, with a reduction in FtsZ GTPase activity.</text>
</comment>
<comment type="subunit">
    <text evidence="1">Interacts with FtsZ.</text>
</comment>
<comment type="subcellular location">
    <subcellularLocation>
        <location evidence="1">Cytoplasm</location>
    </subcellularLocation>
    <text evidence="1">Localizes to mid-cell in an FtsZ-dependent manner.</text>
</comment>
<comment type="similarity">
    <text evidence="1">Belongs to the ZapD family.</text>
</comment>
<name>ZAPD_ECO7I</name>
<gene>
    <name evidence="1" type="primary">zapD</name>
    <name type="ordered locus">ECIAI39_0103</name>
</gene>